<protein>
    <recommendedName>
        <fullName>Lamin tail domain-containing protein 2</fullName>
    </recommendedName>
</protein>
<sequence length="634" mass="70379">MRWLRPAGRRREQESVSGHLGPPAGAPAAPETPTCLPDTTPHPAPVVCSADPQLALESLDPRTLRLLWRQRELEIQALRWAIQNGEDARLCHILEEVAGLPPKRSSHSQEKLLQNQVQKLIQELKEQKERAQWEKEHLEERLLQTTRTLQEMEAELQNLQKSCLLQLARSSWVGRMLRSQTGSVEVVTAETLMDPSDLSENIQAPTGEGFRLEDVDWNSVARRYPNLFTNMEPSSKQKQPRPWPQLDTGSPESSGKHSERHHKTVEWGSLPCLNTSSSGGADSDSSSCRPGLPSFVQVIGHPPRDHRASSEQALVQAGSYSRDSEDLQKTHSPRHGEPVLSPQPCTDPDHWSPELLQSPTGLKIVAVSCREKFVRIFNPSQESTADLSGMVLKQLVRGFPERLYRFPPGTLLAPRHHVTVWGEATRSAKKPLRASSSREPVPLLSIRGCATLLLSPKGEVLSEHRIPRRETPAPRVFADGTDLSIDRFPLPEAGPGADTRKPPRPPRPLRKGRVREPRVSRRRPGTRGLLPPVSSGKLFHAREGPARPENPEIPAPQHLPAIPGDPTLPSPPAEAGLGLEDCRLQKEHRVRVCRKSVDRSCPLVALSVQNTAESRFGFRFLSCLPVTADTCRGA</sequence>
<name>LMTD2_HUMAN</name>
<comment type="interaction">
    <interactant intactId="EBI-12028858">
        <id>Q8IXW0</id>
    </interactant>
    <interactant intactId="EBI-2837036">
        <id>Q6ZUJ4</id>
        <label>C3orf62</label>
    </interactant>
    <organismsDiffer>false</organismsDiffer>
    <experiments>3</experiments>
</comment>
<comment type="interaction">
    <interactant intactId="EBI-12028858">
        <id>Q8IXW0</id>
    </interactant>
    <interactant intactId="EBI-3867333">
        <id>A8MQ03</id>
        <label>CYSRT1</label>
    </interactant>
    <organismsDiffer>false</organismsDiffer>
    <experiments>3</experiments>
</comment>
<comment type="interaction">
    <interactant intactId="EBI-12028858">
        <id>Q8IXW0</id>
    </interactant>
    <interactant intactId="EBI-11956479">
        <id>P23142-4</id>
        <label>FBLN1</label>
    </interactant>
    <organismsDiffer>false</organismsDiffer>
    <experiments>3</experiments>
</comment>
<comment type="interaction">
    <interactant intactId="EBI-12028858">
        <id>Q8IXW0</id>
    </interactant>
    <interactant intactId="EBI-6509505">
        <id>Q0VD86</id>
        <label>INCA1</label>
    </interactant>
    <organismsDiffer>false</organismsDiffer>
    <experiments>3</experiments>
</comment>
<comment type="interaction">
    <interactant intactId="EBI-12028858">
        <id>Q8IXW0</id>
    </interactant>
    <interactant intactId="EBI-742808">
        <id>Q5VWX1</id>
        <label>KHDRBS2</label>
    </interactant>
    <organismsDiffer>false</organismsDiffer>
    <experiments>3</experiments>
</comment>
<comment type="interaction">
    <interactant intactId="EBI-12028858">
        <id>Q8IXW0</id>
    </interactant>
    <interactant intactId="EBI-722504">
        <id>O75525</id>
        <label>KHDRBS3</label>
    </interactant>
    <organismsDiffer>false</organismsDiffer>
    <experiments>3</experiments>
</comment>
<comment type="interaction">
    <interactant intactId="EBI-12028858">
        <id>Q8IXW0</id>
    </interactant>
    <interactant intactId="EBI-3044087">
        <id>Q7Z3Y8</id>
        <label>KRT27</label>
    </interactant>
    <organismsDiffer>false</organismsDiffer>
    <experiments>3</experiments>
</comment>
<comment type="interaction">
    <interactant intactId="EBI-12028858">
        <id>Q8IXW0</id>
    </interactant>
    <interactant intactId="EBI-948001">
        <id>Q15323</id>
        <label>KRT31</label>
    </interactant>
    <organismsDiffer>false</organismsDiffer>
    <experiments>3</experiments>
</comment>
<comment type="interaction">
    <interactant intactId="EBI-12028858">
        <id>Q8IXW0</id>
    </interactant>
    <interactant intactId="EBI-11953334">
        <id>P60328</id>
        <label>KRTAP12-3</label>
    </interactant>
    <organismsDiffer>false</organismsDiffer>
    <experiments>3</experiments>
</comment>
<comment type="interaction">
    <interactant intactId="EBI-12028858">
        <id>Q8IXW0</id>
    </interactant>
    <interactant intactId="EBI-11958178">
        <id>Q701N4</id>
        <label>KRTAP5-2</label>
    </interactant>
    <organismsDiffer>false</organismsDiffer>
    <experiments>3</experiments>
</comment>
<comment type="interaction">
    <interactant intactId="EBI-12028858">
        <id>Q8IXW0</id>
    </interactant>
    <interactant intactId="EBI-10250562">
        <id>Q6L8G9</id>
        <label>KRTAP5-6</label>
    </interactant>
    <organismsDiffer>false</organismsDiffer>
    <experiments>3</experiments>
</comment>
<comment type="interaction">
    <interactant intactId="EBI-12028858">
        <id>Q8IXW0</id>
    </interactant>
    <interactant intactId="EBI-1044640">
        <id>Q9BYQ4</id>
        <label>KRTAP9-2</label>
    </interactant>
    <organismsDiffer>false</organismsDiffer>
    <experiments>3</experiments>
</comment>
<comment type="interaction">
    <interactant intactId="EBI-12028858">
        <id>Q8IXW0</id>
    </interactant>
    <interactant intactId="EBI-1043191">
        <id>Q9BYQ3</id>
        <label>KRTAP9-3</label>
    </interactant>
    <organismsDiffer>false</organismsDiffer>
    <experiments>3</experiments>
</comment>
<comment type="interaction">
    <interactant intactId="EBI-12028858">
        <id>Q8IXW0</id>
    </interactant>
    <interactant intactId="EBI-10172526">
        <id>Q9UJV3-2</id>
        <label>MID2</label>
    </interactant>
    <organismsDiffer>false</organismsDiffer>
    <experiments>3</experiments>
</comment>
<comment type="interaction">
    <interactant intactId="EBI-12028858">
        <id>Q8IXW0</id>
    </interactant>
    <interactant intactId="EBI-22310682">
        <id>P0DPK4</id>
        <label>NOTCH2NLC</label>
    </interactant>
    <organismsDiffer>false</organismsDiffer>
    <experiments>3</experiments>
</comment>
<comment type="interaction">
    <interactant intactId="EBI-12028858">
        <id>Q8IXW0</id>
    </interactant>
    <interactant intactId="EBI-11994018">
        <id>P0DJD3-2</id>
        <label>RBMY1A1</label>
    </interactant>
    <organismsDiffer>false</organismsDiffer>
    <experiments>3</experiments>
</comment>
<comment type="interaction">
    <interactant intactId="EBI-12028858">
        <id>Q8IXW0</id>
    </interactant>
    <interactant intactId="EBI-11899977">
        <id>Q3MII6</id>
        <label>TBC1D25</label>
    </interactant>
    <organismsDiffer>false</organismsDiffer>
    <experiments>3</experiments>
</comment>
<comment type="interaction">
    <interactant intactId="EBI-12028858">
        <id>Q8IXW0</id>
    </interactant>
    <interactant intactId="EBI-949753">
        <id>Q63HR2</id>
        <label>TNS2</label>
    </interactant>
    <organismsDiffer>false</organismsDiffer>
    <experiments>3</experiments>
</comment>
<comment type="interaction">
    <interactant intactId="EBI-12028858">
        <id>Q8IXW0</id>
    </interactant>
    <interactant intactId="EBI-359224">
        <id>Q13077</id>
        <label>TRAF1</label>
    </interactant>
    <organismsDiffer>false</organismsDiffer>
    <experiments>3</experiments>
</comment>
<comment type="interaction">
    <interactant intactId="EBI-12028858">
        <id>Q8IXW0</id>
    </interactant>
    <interactant intactId="EBI-355744">
        <id>Q12933</id>
        <label>TRAF2</label>
    </interactant>
    <organismsDiffer>false</organismsDiffer>
    <experiments>3</experiments>
</comment>
<feature type="chain" id="PRO_0000251929" description="Lamin tail domain-containing protein 2">
    <location>
        <begin position="1"/>
        <end position="634"/>
    </location>
</feature>
<feature type="domain" description="LTD" evidence="2">
    <location>
        <begin position="350"/>
        <end position="468"/>
    </location>
</feature>
<feature type="region of interest" description="Disordered" evidence="3">
    <location>
        <begin position="1"/>
        <end position="44"/>
    </location>
</feature>
<feature type="region of interest" description="Disordered" evidence="3">
    <location>
        <begin position="228"/>
        <end position="349"/>
    </location>
</feature>
<feature type="region of interest" description="Disordered" evidence="3">
    <location>
        <begin position="464"/>
        <end position="575"/>
    </location>
</feature>
<feature type="coiled-coil region" evidence="1">
    <location>
        <begin position="106"/>
        <end position="169"/>
    </location>
</feature>
<feature type="compositionally biased region" description="Polar residues" evidence="3">
    <location>
        <begin position="228"/>
        <end position="237"/>
    </location>
</feature>
<feature type="compositionally biased region" description="Low complexity" evidence="3">
    <location>
        <begin position="276"/>
        <end position="287"/>
    </location>
</feature>
<feature type="compositionally biased region" description="Polar residues" evidence="3">
    <location>
        <begin position="310"/>
        <end position="321"/>
    </location>
</feature>
<feature type="compositionally biased region" description="Basic and acidic residues" evidence="3">
    <location>
        <begin position="322"/>
        <end position="337"/>
    </location>
</feature>
<feature type="compositionally biased region" description="Basic residues" evidence="3">
    <location>
        <begin position="502"/>
        <end position="513"/>
    </location>
</feature>
<feature type="compositionally biased region" description="Basic and acidic residues" evidence="3">
    <location>
        <begin position="540"/>
        <end position="550"/>
    </location>
</feature>
<feature type="sequence variant" id="VAR_027732" description="In dbSNP:rs2061586." evidence="4">
    <original>A</original>
    <variation>T</variation>
    <location>
        <position position="44"/>
    </location>
</feature>
<evidence type="ECO:0000255" key="1"/>
<evidence type="ECO:0000255" key="2">
    <source>
        <dbReference type="PROSITE-ProRule" id="PRU01187"/>
    </source>
</evidence>
<evidence type="ECO:0000256" key="3">
    <source>
        <dbReference type="SAM" id="MobiDB-lite"/>
    </source>
</evidence>
<evidence type="ECO:0000269" key="4">
    <source>
    </source>
</evidence>
<proteinExistence type="evidence at protein level"/>
<reference key="1">
    <citation type="journal article" date="2006" name="Nature">
        <title>Human chromosome 11 DNA sequence and analysis including novel gene identification.</title>
        <authorList>
            <person name="Taylor T.D."/>
            <person name="Noguchi H."/>
            <person name="Totoki Y."/>
            <person name="Toyoda A."/>
            <person name="Kuroki Y."/>
            <person name="Dewar K."/>
            <person name="Lloyd C."/>
            <person name="Itoh T."/>
            <person name="Takeda T."/>
            <person name="Kim D.-W."/>
            <person name="She X."/>
            <person name="Barlow K.F."/>
            <person name="Bloom T."/>
            <person name="Bruford E."/>
            <person name="Chang J.L."/>
            <person name="Cuomo C.A."/>
            <person name="Eichler E."/>
            <person name="FitzGerald M.G."/>
            <person name="Jaffe D.B."/>
            <person name="LaButti K."/>
            <person name="Nicol R."/>
            <person name="Park H.-S."/>
            <person name="Seaman C."/>
            <person name="Sougnez C."/>
            <person name="Yang X."/>
            <person name="Zimmer A.R."/>
            <person name="Zody M.C."/>
            <person name="Birren B.W."/>
            <person name="Nusbaum C."/>
            <person name="Fujiyama A."/>
            <person name="Hattori M."/>
            <person name="Rogers J."/>
            <person name="Lander E.S."/>
            <person name="Sakaki Y."/>
        </authorList>
    </citation>
    <scope>NUCLEOTIDE SEQUENCE [LARGE SCALE GENOMIC DNA]</scope>
</reference>
<reference key="2">
    <citation type="journal article" date="2004" name="Genome Res.">
        <title>The status, quality, and expansion of the NIH full-length cDNA project: the Mammalian Gene Collection (MGC).</title>
        <authorList>
            <consortium name="The MGC Project Team"/>
        </authorList>
    </citation>
    <scope>NUCLEOTIDE SEQUENCE [LARGE SCALE MRNA]</scope>
    <scope>VARIANT THR-44</scope>
    <source>
        <tissue>Brain</tissue>
    </source>
</reference>
<gene>
    <name type="primary">LMNTD2</name>
    <name type="synonym">C11orf35</name>
</gene>
<accession>Q8IXW0</accession>
<dbReference type="EMBL" id="AP006284">
    <property type="status" value="NOT_ANNOTATED_CDS"/>
    <property type="molecule type" value="Genomic_DNA"/>
</dbReference>
<dbReference type="EMBL" id="BC039077">
    <property type="protein sequence ID" value="AAH39077.1"/>
    <property type="molecule type" value="mRNA"/>
</dbReference>
<dbReference type="CCDS" id="CCDS7701.1"/>
<dbReference type="RefSeq" id="NP_775844.2">
    <property type="nucleotide sequence ID" value="NM_173573.3"/>
</dbReference>
<dbReference type="SMR" id="Q8IXW0"/>
<dbReference type="BioGRID" id="129158">
    <property type="interactions" value="18"/>
</dbReference>
<dbReference type="FunCoup" id="Q8IXW0">
    <property type="interactions" value="11"/>
</dbReference>
<dbReference type="IntAct" id="Q8IXW0">
    <property type="interactions" value="20"/>
</dbReference>
<dbReference type="STRING" id="9606.ENSP00000331167"/>
<dbReference type="GlyGen" id="Q8IXW0">
    <property type="glycosylation" value="1 site, 1 O-linked glycan (1 site)"/>
</dbReference>
<dbReference type="iPTMnet" id="Q8IXW0"/>
<dbReference type="PhosphoSitePlus" id="Q8IXW0"/>
<dbReference type="BioMuta" id="LMNTD2"/>
<dbReference type="DMDM" id="317373345"/>
<dbReference type="jPOST" id="Q8IXW0"/>
<dbReference type="MassIVE" id="Q8IXW0"/>
<dbReference type="PaxDb" id="9606-ENSP00000331167"/>
<dbReference type="PeptideAtlas" id="Q8IXW0"/>
<dbReference type="ProteomicsDB" id="71069"/>
<dbReference type="Antibodypedia" id="70549">
    <property type="antibodies" value="9 antibodies from 4 providers"/>
</dbReference>
<dbReference type="DNASU" id="256329"/>
<dbReference type="Ensembl" id="ENST00000329451.8">
    <property type="protein sequence ID" value="ENSP00000331167.3"/>
    <property type="gene ID" value="ENSG00000185522.9"/>
</dbReference>
<dbReference type="Ensembl" id="ENST00000621319.2">
    <property type="protein sequence ID" value="ENSP00000478197.1"/>
    <property type="gene ID" value="ENSG00000275873.2"/>
</dbReference>
<dbReference type="GeneID" id="256329"/>
<dbReference type="KEGG" id="hsa:256329"/>
<dbReference type="MANE-Select" id="ENST00000329451.8">
    <property type="protein sequence ID" value="ENSP00000331167.3"/>
    <property type="RefSeq nucleotide sequence ID" value="NM_173573.3"/>
    <property type="RefSeq protein sequence ID" value="NP_775844.2"/>
</dbReference>
<dbReference type="UCSC" id="uc001lpx.4">
    <property type="organism name" value="human"/>
</dbReference>
<dbReference type="AGR" id="HGNC:28561"/>
<dbReference type="CTD" id="256329"/>
<dbReference type="GeneCards" id="LMNTD2"/>
<dbReference type="HGNC" id="HGNC:28561">
    <property type="gene designation" value="LMNTD2"/>
</dbReference>
<dbReference type="HPA" id="ENSG00000185522">
    <property type="expression patterns" value="Tissue enhanced (liver, testis)"/>
</dbReference>
<dbReference type="neXtProt" id="NX_Q8IXW0"/>
<dbReference type="OpenTargets" id="ENSG00000185522"/>
<dbReference type="PharmGKB" id="PA142672302"/>
<dbReference type="VEuPathDB" id="HostDB:ENSG00000185522"/>
<dbReference type="eggNOG" id="KOG0977">
    <property type="taxonomic scope" value="Eukaryota"/>
</dbReference>
<dbReference type="GeneTree" id="ENSGT00390000012150"/>
<dbReference type="HOGENOM" id="CLU_432519_0_0_1"/>
<dbReference type="InParanoid" id="Q8IXW0"/>
<dbReference type="OMA" id="HLTVWGE"/>
<dbReference type="OrthoDB" id="9838108at2759"/>
<dbReference type="PAN-GO" id="Q8IXW0">
    <property type="GO annotations" value="3 GO annotations based on evolutionary models"/>
</dbReference>
<dbReference type="PhylomeDB" id="Q8IXW0"/>
<dbReference type="TreeFam" id="TF337768"/>
<dbReference type="PathwayCommons" id="Q8IXW0"/>
<dbReference type="SignaLink" id="Q8IXW0"/>
<dbReference type="BioGRID-ORCS" id="256329">
    <property type="hits" value="11 hits in 1138 CRISPR screens"/>
</dbReference>
<dbReference type="GenomeRNAi" id="256329"/>
<dbReference type="Pharos" id="Q8IXW0">
    <property type="development level" value="Tdark"/>
</dbReference>
<dbReference type="PRO" id="PR:Q8IXW0"/>
<dbReference type="Proteomes" id="UP000005640">
    <property type="component" value="Chromosome 11"/>
</dbReference>
<dbReference type="RNAct" id="Q8IXW0">
    <property type="molecule type" value="protein"/>
</dbReference>
<dbReference type="Bgee" id="ENSG00000185522">
    <property type="expression patterns" value="Expressed in right uterine tube and 89 other cell types or tissues"/>
</dbReference>
<dbReference type="ExpressionAtlas" id="Q8IXW0">
    <property type="expression patterns" value="baseline and differential"/>
</dbReference>
<dbReference type="GO" id="GO:0005638">
    <property type="term" value="C:lamin filament"/>
    <property type="evidence" value="ECO:0000318"/>
    <property type="project" value="GO_Central"/>
</dbReference>
<dbReference type="GO" id="GO:0030527">
    <property type="term" value="F:structural constituent of chromatin"/>
    <property type="evidence" value="ECO:0000318"/>
    <property type="project" value="GO_Central"/>
</dbReference>
<dbReference type="Gene3D" id="2.60.40.1260">
    <property type="entry name" value="Lamin Tail domain"/>
    <property type="match status" value="1"/>
</dbReference>
<dbReference type="InterPro" id="IPR001322">
    <property type="entry name" value="Lamin_tail_dom"/>
</dbReference>
<dbReference type="InterPro" id="IPR036415">
    <property type="entry name" value="Lamin_tail_dom_sf"/>
</dbReference>
<dbReference type="InterPro" id="IPR052877">
    <property type="entry name" value="Lamin_tail_domain"/>
</dbReference>
<dbReference type="PANTHER" id="PTHR19956">
    <property type="entry name" value="LAMIN TAIL DOMAIN-CONTAINING PROTEIN 2"/>
    <property type="match status" value="1"/>
</dbReference>
<dbReference type="PANTHER" id="PTHR19956:SF5">
    <property type="entry name" value="LAMIN TAIL DOMAIN-CONTAINING PROTEIN 2"/>
    <property type="match status" value="1"/>
</dbReference>
<dbReference type="Pfam" id="PF00932">
    <property type="entry name" value="LTD"/>
    <property type="match status" value="1"/>
</dbReference>
<dbReference type="SUPFAM" id="SSF74853">
    <property type="entry name" value="Lamin A/C globular tail domain"/>
    <property type="match status" value="1"/>
</dbReference>
<dbReference type="PROSITE" id="PS51841">
    <property type="entry name" value="LTD"/>
    <property type="match status" value="1"/>
</dbReference>
<organism>
    <name type="scientific">Homo sapiens</name>
    <name type="common">Human</name>
    <dbReference type="NCBI Taxonomy" id="9606"/>
    <lineage>
        <taxon>Eukaryota</taxon>
        <taxon>Metazoa</taxon>
        <taxon>Chordata</taxon>
        <taxon>Craniata</taxon>
        <taxon>Vertebrata</taxon>
        <taxon>Euteleostomi</taxon>
        <taxon>Mammalia</taxon>
        <taxon>Eutheria</taxon>
        <taxon>Euarchontoglires</taxon>
        <taxon>Primates</taxon>
        <taxon>Haplorrhini</taxon>
        <taxon>Catarrhini</taxon>
        <taxon>Hominidae</taxon>
        <taxon>Homo</taxon>
    </lineage>
</organism>
<keyword id="KW-0175">Coiled coil</keyword>
<keyword id="KW-1267">Proteomics identification</keyword>
<keyword id="KW-1185">Reference proteome</keyword>